<name>Y499_GEOSW</name>
<feature type="chain" id="PRO_1000215325" description="UPF0295 protein GWCH70_0499">
    <location>
        <begin position="1"/>
        <end position="118"/>
    </location>
</feature>
<feature type="transmembrane region" description="Helical" evidence="1">
    <location>
        <begin position="12"/>
        <end position="32"/>
    </location>
</feature>
<feature type="transmembrane region" description="Helical" evidence="1">
    <location>
        <begin position="42"/>
        <end position="62"/>
    </location>
</feature>
<evidence type="ECO:0000255" key="1">
    <source>
        <dbReference type="HAMAP-Rule" id="MF_01502"/>
    </source>
</evidence>
<dbReference type="EMBL" id="CP001638">
    <property type="protein sequence ID" value="ACS23409.1"/>
    <property type="molecule type" value="Genomic_DNA"/>
</dbReference>
<dbReference type="SMR" id="C5D5W1"/>
<dbReference type="STRING" id="471223.GWCH70_0499"/>
<dbReference type="KEGG" id="gwc:GWCH70_0499"/>
<dbReference type="eggNOG" id="ENOG50313Y4">
    <property type="taxonomic scope" value="Bacteria"/>
</dbReference>
<dbReference type="HOGENOM" id="CLU_143991_0_0_9"/>
<dbReference type="OrthoDB" id="1653848at2"/>
<dbReference type="GO" id="GO:0005886">
    <property type="term" value="C:plasma membrane"/>
    <property type="evidence" value="ECO:0007669"/>
    <property type="project" value="UniProtKB-SubCell"/>
</dbReference>
<dbReference type="HAMAP" id="MF_01502">
    <property type="entry name" value="UPF0295"/>
    <property type="match status" value="1"/>
</dbReference>
<dbReference type="InterPro" id="IPR020912">
    <property type="entry name" value="UPF0295"/>
</dbReference>
<dbReference type="NCBIfam" id="NF002796">
    <property type="entry name" value="PRK02935.1"/>
    <property type="match status" value="1"/>
</dbReference>
<dbReference type="Pfam" id="PF11023">
    <property type="entry name" value="DUF2614"/>
    <property type="match status" value="1"/>
</dbReference>
<comment type="subcellular location">
    <subcellularLocation>
        <location evidence="1">Cell membrane</location>
        <topology evidence="1">Multi-pass membrane protein</topology>
    </subcellularLocation>
</comment>
<comment type="similarity">
    <text evidence="1">Belongs to the UPF0295 family.</text>
</comment>
<gene>
    <name type="ordered locus">GWCH70_0499</name>
</gene>
<proteinExistence type="inferred from homology"/>
<keyword id="KW-1003">Cell membrane</keyword>
<keyword id="KW-0472">Membrane</keyword>
<keyword id="KW-0812">Transmembrane</keyword>
<keyword id="KW-1133">Transmembrane helix</keyword>
<reference key="1">
    <citation type="submission" date="2009-06" db="EMBL/GenBank/DDBJ databases">
        <title>Complete sequence of chromosome of Geopacillus sp. WCH70.</title>
        <authorList>
            <consortium name="US DOE Joint Genome Institute"/>
            <person name="Lucas S."/>
            <person name="Copeland A."/>
            <person name="Lapidus A."/>
            <person name="Glavina del Rio T."/>
            <person name="Dalin E."/>
            <person name="Tice H."/>
            <person name="Bruce D."/>
            <person name="Goodwin L."/>
            <person name="Pitluck S."/>
            <person name="Chertkov O."/>
            <person name="Brettin T."/>
            <person name="Detter J.C."/>
            <person name="Han C."/>
            <person name="Larimer F."/>
            <person name="Land M."/>
            <person name="Hauser L."/>
            <person name="Kyrpides N."/>
            <person name="Mikhailova N."/>
            <person name="Brumm P."/>
            <person name="Mead D.A."/>
            <person name="Richardson P."/>
        </authorList>
    </citation>
    <scope>NUCLEOTIDE SEQUENCE [LARGE SCALE GENOMIC DNA]</scope>
    <source>
        <strain>WCH70</strain>
    </source>
</reference>
<accession>C5D5W1</accession>
<sequence length="118" mass="13499">MGIKYSSKINKIRTFALSLIFVGFIVMYIGIFFRTSPFVMTLFMILGLLFIIASTVVYFWIGTLSTRAVKVVCPSCGKITKMLGKVDLCMFCNEPLTLDPELEGKEFDEKYNRKKRKS</sequence>
<organism>
    <name type="scientific">Geobacillus sp. (strain WCH70)</name>
    <dbReference type="NCBI Taxonomy" id="471223"/>
    <lineage>
        <taxon>Bacteria</taxon>
        <taxon>Bacillati</taxon>
        <taxon>Bacillota</taxon>
        <taxon>Bacilli</taxon>
        <taxon>Bacillales</taxon>
        <taxon>Anoxybacillaceae</taxon>
        <taxon>Geobacillus</taxon>
    </lineage>
</organism>
<protein>
    <recommendedName>
        <fullName evidence="1">UPF0295 protein GWCH70_0499</fullName>
    </recommendedName>
</protein>